<accession>P0CD40</accession>
<accession>P0C159</accession>
<name>NU2C1_SACHY</name>
<evidence type="ECO:0000255" key="1">
    <source>
        <dbReference type="HAMAP-Rule" id="MF_00445"/>
    </source>
</evidence>
<evidence type="ECO:0000269" key="2">
    <source>
    </source>
</evidence>
<proteinExistence type="evidence at transcript level"/>
<keyword id="KW-0150">Chloroplast</keyword>
<keyword id="KW-0472">Membrane</keyword>
<keyword id="KW-0520">NAD</keyword>
<keyword id="KW-0521">NADP</keyword>
<keyword id="KW-0934">Plastid</keyword>
<keyword id="KW-0618">Plastoquinone</keyword>
<keyword id="KW-0874">Quinone</keyword>
<keyword id="KW-0691">RNA editing</keyword>
<keyword id="KW-0793">Thylakoid</keyword>
<keyword id="KW-1278">Translocase</keyword>
<keyword id="KW-0812">Transmembrane</keyword>
<keyword id="KW-1133">Transmembrane helix</keyword>
<keyword id="KW-0813">Transport</keyword>
<comment type="function">
    <text evidence="1">NDH shuttles electrons from NAD(P)H:plastoquinone, via FMN and iron-sulfur (Fe-S) centers, to quinones in the photosynthetic chain and possibly in a chloroplast respiratory chain. The immediate electron acceptor for the enzyme in this species is believed to be plastoquinone. Couples the redox reaction to proton translocation, and thus conserves the redox energy in a proton gradient.</text>
</comment>
<comment type="catalytic activity">
    <reaction evidence="1">
        <text>a plastoquinone + NADH + (n+1) H(+)(in) = a plastoquinol + NAD(+) + n H(+)(out)</text>
        <dbReference type="Rhea" id="RHEA:42608"/>
        <dbReference type="Rhea" id="RHEA-COMP:9561"/>
        <dbReference type="Rhea" id="RHEA-COMP:9562"/>
        <dbReference type="ChEBI" id="CHEBI:15378"/>
        <dbReference type="ChEBI" id="CHEBI:17757"/>
        <dbReference type="ChEBI" id="CHEBI:57540"/>
        <dbReference type="ChEBI" id="CHEBI:57945"/>
        <dbReference type="ChEBI" id="CHEBI:62192"/>
    </reaction>
</comment>
<comment type="catalytic activity">
    <reaction evidence="1">
        <text>a plastoquinone + NADPH + (n+1) H(+)(in) = a plastoquinol + NADP(+) + n H(+)(out)</text>
        <dbReference type="Rhea" id="RHEA:42612"/>
        <dbReference type="Rhea" id="RHEA-COMP:9561"/>
        <dbReference type="Rhea" id="RHEA-COMP:9562"/>
        <dbReference type="ChEBI" id="CHEBI:15378"/>
        <dbReference type="ChEBI" id="CHEBI:17757"/>
        <dbReference type="ChEBI" id="CHEBI:57783"/>
        <dbReference type="ChEBI" id="CHEBI:58349"/>
        <dbReference type="ChEBI" id="CHEBI:62192"/>
    </reaction>
</comment>
<comment type="subunit">
    <text evidence="1">NDH is composed of at least 16 different subunits, 5 of which are encoded in the nucleus.</text>
</comment>
<comment type="subcellular location">
    <subcellularLocation>
        <location evidence="1">Plastid</location>
        <location evidence="1">Chloroplast thylakoid membrane</location>
        <topology evidence="1">Multi-pass membrane protein</topology>
    </subcellularLocation>
</comment>
<comment type="RNA editing">
    <location>
        <position position="156" evidence="2"/>
    </location>
    <location>
        <position position="196" evidence="2"/>
    </location>
    <location>
        <position position="204" evidence="2"/>
    </location>
    <location>
        <position position="246" evidence="2"/>
    </location>
    <location>
        <position position="277" evidence="2"/>
    </location>
    <location>
        <position position="494" evidence="2"/>
    </location>
</comment>
<comment type="similarity">
    <text evidence="1">Belongs to the complex I subunit 2 family.</text>
</comment>
<feature type="chain" id="PRO_0000226942" description="NAD(P)H-quinone oxidoreductase subunit 2 A, chloroplastic">
    <location>
        <begin position="1"/>
        <end position="510"/>
    </location>
</feature>
<feature type="transmembrane region" description="Helical" evidence="1">
    <location>
        <begin position="31"/>
        <end position="51"/>
    </location>
</feature>
<feature type="transmembrane region" description="Helical" evidence="1">
    <location>
        <begin position="59"/>
        <end position="79"/>
    </location>
</feature>
<feature type="transmembrane region" description="Helical" evidence="1">
    <location>
        <begin position="99"/>
        <end position="119"/>
    </location>
</feature>
<feature type="transmembrane region" description="Helical" evidence="1">
    <location>
        <begin position="124"/>
        <end position="144"/>
    </location>
</feature>
<feature type="transmembrane region" description="Helical" evidence="1">
    <location>
        <begin position="149"/>
        <end position="169"/>
    </location>
</feature>
<feature type="transmembrane region" description="Helical" evidence="1">
    <location>
        <begin position="184"/>
        <end position="204"/>
    </location>
</feature>
<feature type="transmembrane region" description="Helical" evidence="1">
    <location>
        <begin position="229"/>
        <end position="249"/>
    </location>
</feature>
<feature type="transmembrane region" description="Helical" evidence="1">
    <location>
        <begin position="261"/>
        <end position="281"/>
    </location>
</feature>
<feature type="transmembrane region" description="Helical" evidence="1">
    <location>
        <begin position="295"/>
        <end position="315"/>
    </location>
</feature>
<feature type="transmembrane region" description="Helical" evidence="1">
    <location>
        <begin position="323"/>
        <end position="343"/>
    </location>
</feature>
<feature type="transmembrane region" description="Helical" evidence="1">
    <location>
        <begin position="354"/>
        <end position="374"/>
    </location>
</feature>
<feature type="transmembrane region" description="Helical" evidence="1">
    <location>
        <begin position="395"/>
        <end position="415"/>
    </location>
</feature>
<feature type="transmembrane region" description="Helical" evidence="1">
    <location>
        <begin position="418"/>
        <end position="438"/>
    </location>
</feature>
<feature type="transmembrane region" description="Helical" evidence="1">
    <location>
        <begin position="484"/>
        <end position="504"/>
    </location>
</feature>
<organism>
    <name type="scientific">Saccharum hybrid</name>
    <name type="common">Sugarcane</name>
    <dbReference type="NCBI Taxonomy" id="15819"/>
    <lineage>
        <taxon>Eukaryota</taxon>
        <taxon>Viridiplantae</taxon>
        <taxon>Streptophyta</taxon>
        <taxon>Embryophyta</taxon>
        <taxon>Tracheophyta</taxon>
        <taxon>Spermatophyta</taxon>
        <taxon>Magnoliopsida</taxon>
        <taxon>Liliopsida</taxon>
        <taxon>Poales</taxon>
        <taxon>Poaceae</taxon>
        <taxon>PACMAD clade</taxon>
        <taxon>Panicoideae</taxon>
        <taxon>Andropogonodae</taxon>
        <taxon>Andropogoneae</taxon>
        <taxon>Saccharinae</taxon>
        <taxon>Saccharum</taxon>
    </lineage>
</organism>
<geneLocation type="chloroplast"/>
<sequence length="510" mass="56931">MIWHVQNENFILDSTRIFMKAFHLLLFNGSFIFPECILIFGLILLLMIDLTSDQKDRPWFYFISSTSLVISITALLFRWREEPIISFSGNFQTNNFNEIFQFLILLCSTLCIPLSVEYIECTEMAITEFLLFVLTATLGGMFLCGANDLITIFVALECFSLCSYLLSGYTKRDLRSNEATMKYLLMGGASSSILVLGFSWLYGLSGGEIELQEIVNGLINTQMYNSPGISIALIFITVGLGFKLSLAPFHQWTPDVYEGSPTPVVAFLSVTSKVAALALATRILDIPFYFSSNEWHLLLEILAILSMILGNLLAITQTSMKRMLAYSSIGQIGYVIIGIIVGDSNDGYASMITYMLFYISMNLGTFACIVLFGLRTGTDNIRDYAGLYTKDPFLALSLALCLLSLGGLPPLAGFFGKLYLFWCGWQAGLYFLVSIGLLTSVLSIYYYLKIIKLLMTGRNQEITPYVRNYRRSPLRSNNSIELSMTVCVIASTILGISMNPILAIAQDTLF</sequence>
<gene>
    <name evidence="1" type="primary">ndhB1</name>
    <name type="synonym">ndhB-A</name>
    <name type="ordered locus">PS020</name>
</gene>
<reference key="1">
    <citation type="journal article" date="2004" name="Curr. Genet.">
        <title>Structural features and transcript-editing analysis of sugarcane (Saccharum officinarum L.) chloroplast genome.</title>
        <authorList>
            <person name="Calsa T. Jr."/>
            <person name="Carraro D.M."/>
            <person name="Benatti M.R."/>
            <person name="Barbosa A.C."/>
            <person name="Kitajima J.P."/>
            <person name="Carrer H."/>
        </authorList>
    </citation>
    <scope>NUCLEOTIDE SEQUENCE [LARGE SCALE GENOMIC DNA]</scope>
    <scope>RNA EDITING</scope>
    <source>
        <strain>cv. SP-80-3280</strain>
    </source>
</reference>
<dbReference type="EC" id="7.1.1.-" evidence="1"/>
<dbReference type="EMBL" id="AE009947">
    <property type="status" value="NOT_ANNOTATED_CDS"/>
    <property type="molecule type" value="Genomic_DNA"/>
</dbReference>
<dbReference type="SMR" id="P0CD40"/>
<dbReference type="GO" id="GO:0009535">
    <property type="term" value="C:chloroplast thylakoid membrane"/>
    <property type="evidence" value="ECO:0007669"/>
    <property type="project" value="UniProtKB-SubCell"/>
</dbReference>
<dbReference type="GO" id="GO:0008137">
    <property type="term" value="F:NADH dehydrogenase (ubiquinone) activity"/>
    <property type="evidence" value="ECO:0007669"/>
    <property type="project" value="InterPro"/>
</dbReference>
<dbReference type="GO" id="GO:0048038">
    <property type="term" value="F:quinone binding"/>
    <property type="evidence" value="ECO:0007669"/>
    <property type="project" value="UniProtKB-KW"/>
</dbReference>
<dbReference type="GO" id="GO:0042773">
    <property type="term" value="P:ATP synthesis coupled electron transport"/>
    <property type="evidence" value="ECO:0007669"/>
    <property type="project" value="InterPro"/>
</dbReference>
<dbReference type="GO" id="GO:0019684">
    <property type="term" value="P:photosynthesis, light reaction"/>
    <property type="evidence" value="ECO:0007669"/>
    <property type="project" value="UniProtKB-UniRule"/>
</dbReference>
<dbReference type="HAMAP" id="MF_00445">
    <property type="entry name" value="NDH1_NuoN_1"/>
    <property type="match status" value="1"/>
</dbReference>
<dbReference type="InterPro" id="IPR010096">
    <property type="entry name" value="NADH-Q_OxRdtase_suN/2"/>
</dbReference>
<dbReference type="InterPro" id="IPR001750">
    <property type="entry name" value="ND/Mrp_TM"/>
</dbReference>
<dbReference type="InterPro" id="IPR045693">
    <property type="entry name" value="Ndh2_N"/>
</dbReference>
<dbReference type="NCBIfam" id="TIGR01770">
    <property type="entry name" value="NDH_I_N"/>
    <property type="match status" value="1"/>
</dbReference>
<dbReference type="NCBIfam" id="NF002701">
    <property type="entry name" value="PRK02504.1"/>
    <property type="match status" value="1"/>
</dbReference>
<dbReference type="PANTHER" id="PTHR22773">
    <property type="entry name" value="NADH DEHYDROGENASE"/>
    <property type="match status" value="1"/>
</dbReference>
<dbReference type="Pfam" id="PF19530">
    <property type="entry name" value="Ndh2_N"/>
    <property type="match status" value="1"/>
</dbReference>
<dbReference type="Pfam" id="PF00361">
    <property type="entry name" value="Proton_antipo_M"/>
    <property type="match status" value="1"/>
</dbReference>
<dbReference type="PRINTS" id="PR01434">
    <property type="entry name" value="NADHDHGNASE5"/>
</dbReference>
<protein>
    <recommendedName>
        <fullName evidence="1">NAD(P)H-quinone oxidoreductase subunit 2 A, chloroplastic</fullName>
        <ecNumber evidence="1">7.1.1.-</ecNumber>
    </recommendedName>
    <alternativeName>
        <fullName evidence="1">NAD(P)H dehydrogenase, subunit 2 A</fullName>
    </alternativeName>
    <alternativeName>
        <fullName evidence="1">NADH-plastoquinone oxidoreductase subunit 2 A</fullName>
    </alternativeName>
</protein>